<keyword id="KW-0496">Mitochondrion</keyword>
<keyword id="KW-1185">Reference proteome</keyword>
<keyword id="KW-0687">Ribonucleoprotein</keyword>
<keyword id="KW-0689">Ribosomal protein</keyword>
<keyword id="KW-0809">Transit peptide</keyword>
<dbReference type="EMBL" id="HE601157">
    <property type="protein sequence ID" value="CAP38300.2"/>
    <property type="molecule type" value="Genomic_DNA"/>
</dbReference>
<dbReference type="SMR" id="Q60R52"/>
<dbReference type="FunCoup" id="Q60R52">
    <property type="interactions" value="1589"/>
</dbReference>
<dbReference type="STRING" id="6238.Q60R52"/>
<dbReference type="EnsemblMetazoa" id="CBG21526.1">
    <property type="protein sequence ID" value="CBG21526.1"/>
    <property type="gene ID" value="WBGene00040271"/>
</dbReference>
<dbReference type="WormBase" id="CBG21526">
    <property type="protein sequence ID" value="CBP32824"/>
    <property type="gene ID" value="WBGene00040271"/>
    <property type="gene designation" value="Cbr-mrps-7"/>
</dbReference>
<dbReference type="eggNOG" id="KOG3291">
    <property type="taxonomic scope" value="Eukaryota"/>
</dbReference>
<dbReference type="HOGENOM" id="CLU_072226_0_1_1"/>
<dbReference type="InParanoid" id="Q60R52"/>
<dbReference type="OMA" id="HELHKQC"/>
<dbReference type="Proteomes" id="UP000008549">
    <property type="component" value="Unassembled WGS sequence"/>
</dbReference>
<dbReference type="GO" id="GO:0005763">
    <property type="term" value="C:mitochondrial small ribosomal subunit"/>
    <property type="evidence" value="ECO:0000250"/>
    <property type="project" value="UniProtKB"/>
</dbReference>
<dbReference type="GO" id="GO:0005840">
    <property type="term" value="C:ribosome"/>
    <property type="evidence" value="ECO:0000318"/>
    <property type="project" value="GO_Central"/>
</dbReference>
<dbReference type="GO" id="GO:0003729">
    <property type="term" value="F:mRNA binding"/>
    <property type="evidence" value="ECO:0000318"/>
    <property type="project" value="GO_Central"/>
</dbReference>
<dbReference type="GO" id="GO:0019843">
    <property type="term" value="F:rRNA binding"/>
    <property type="evidence" value="ECO:0000318"/>
    <property type="project" value="GO_Central"/>
</dbReference>
<dbReference type="GO" id="GO:0003735">
    <property type="term" value="F:structural constituent of ribosome"/>
    <property type="evidence" value="ECO:0000250"/>
    <property type="project" value="UniProtKB"/>
</dbReference>
<dbReference type="GO" id="GO:0032543">
    <property type="term" value="P:mitochondrial translation"/>
    <property type="evidence" value="ECO:0000250"/>
    <property type="project" value="UniProtKB"/>
</dbReference>
<dbReference type="GO" id="GO:0000028">
    <property type="term" value="P:ribosomal small subunit assembly"/>
    <property type="evidence" value="ECO:0000318"/>
    <property type="project" value="GO_Central"/>
</dbReference>
<dbReference type="GO" id="GO:0006412">
    <property type="term" value="P:translation"/>
    <property type="evidence" value="ECO:0000318"/>
    <property type="project" value="GO_Central"/>
</dbReference>
<dbReference type="CDD" id="cd14870">
    <property type="entry name" value="uS7_Mitochondria_Mammalian"/>
    <property type="match status" value="1"/>
</dbReference>
<dbReference type="FunFam" id="1.10.455.10:FF:000009">
    <property type="entry name" value="Ribosomal protein S7"/>
    <property type="match status" value="1"/>
</dbReference>
<dbReference type="Gene3D" id="1.10.455.10">
    <property type="entry name" value="Ribosomal protein S7 domain"/>
    <property type="match status" value="1"/>
</dbReference>
<dbReference type="InterPro" id="IPR000235">
    <property type="entry name" value="Ribosomal_uS7"/>
</dbReference>
<dbReference type="InterPro" id="IPR023798">
    <property type="entry name" value="Ribosomal_uS7_dom"/>
</dbReference>
<dbReference type="InterPro" id="IPR036823">
    <property type="entry name" value="Ribosomal_uS7_dom_sf"/>
</dbReference>
<dbReference type="PANTHER" id="PTHR11205">
    <property type="entry name" value="RIBOSOMAL PROTEIN S7"/>
    <property type="match status" value="1"/>
</dbReference>
<dbReference type="Pfam" id="PF00177">
    <property type="entry name" value="Ribosomal_S7"/>
    <property type="match status" value="1"/>
</dbReference>
<dbReference type="SUPFAM" id="SSF47973">
    <property type="entry name" value="Ribosomal protein S7"/>
    <property type="match status" value="1"/>
</dbReference>
<evidence type="ECO:0000250" key="1"/>
<evidence type="ECO:0000255" key="2"/>
<evidence type="ECO:0000305" key="3"/>
<sequence length="222" mass="25678">MSKKLANFAQKRWISCSSNSFNMYDPRVFREPVSNVQELRKPLDVDDERNFLFLKAMKSDATPVFYRDSVIDKLIRVCTKDGEKETSRKNVLSALEIIKRRQYKAWTKANDEEKKSIELDPFVIARKGIKNCHPLMKLQGVTRGGTTYQVPFPIEEPEAEFRAMKMMRDICRVRAKHGETHFKDILATELLAASQNEGSTITAKQELHKTCEANRAYAHYRA</sequence>
<feature type="transit peptide" description="Mitochondrion" evidence="2">
    <location>
        <begin position="1"/>
        <end position="14"/>
    </location>
</feature>
<feature type="chain" id="PRO_0000273062" description="Small ribosomal subunit protein uS7m">
    <location>
        <begin position="15"/>
        <end position="222"/>
    </location>
</feature>
<gene>
    <name type="primary">mrps-7</name>
    <name type="ORF">CBG21526</name>
</gene>
<accession>Q60R52</accession>
<accession>A8Y0B5</accession>
<proteinExistence type="inferred from homology"/>
<comment type="subunit">
    <text evidence="1">Component of the mitochondrial ribosome small subunit (28S) which comprises a 12S rRNA and about 30 distinct proteins.</text>
</comment>
<comment type="subcellular location">
    <subcellularLocation>
        <location evidence="1">Mitochondrion</location>
    </subcellularLocation>
</comment>
<comment type="similarity">
    <text evidence="3">Belongs to the universal ribosomal protein uS7 family.</text>
</comment>
<name>RT07_CAEBR</name>
<protein>
    <recommendedName>
        <fullName evidence="3">Small ribosomal subunit protein uS7m</fullName>
    </recommendedName>
    <alternativeName>
        <fullName>28S ribosomal protein S7, mitochondrial</fullName>
        <shortName>MRP-S7</shortName>
        <shortName>S7mt</shortName>
    </alternativeName>
</protein>
<organism>
    <name type="scientific">Caenorhabditis briggsae</name>
    <dbReference type="NCBI Taxonomy" id="6238"/>
    <lineage>
        <taxon>Eukaryota</taxon>
        <taxon>Metazoa</taxon>
        <taxon>Ecdysozoa</taxon>
        <taxon>Nematoda</taxon>
        <taxon>Chromadorea</taxon>
        <taxon>Rhabditida</taxon>
        <taxon>Rhabditina</taxon>
        <taxon>Rhabditomorpha</taxon>
        <taxon>Rhabditoidea</taxon>
        <taxon>Rhabditidae</taxon>
        <taxon>Peloderinae</taxon>
        <taxon>Caenorhabditis</taxon>
    </lineage>
</organism>
<reference key="1">
    <citation type="journal article" date="2003" name="PLoS Biol.">
        <title>The genome sequence of Caenorhabditis briggsae: a platform for comparative genomics.</title>
        <authorList>
            <person name="Stein L.D."/>
            <person name="Bao Z."/>
            <person name="Blasiar D."/>
            <person name="Blumenthal T."/>
            <person name="Brent M.R."/>
            <person name="Chen N."/>
            <person name="Chinwalla A."/>
            <person name="Clarke L."/>
            <person name="Clee C."/>
            <person name="Coghlan A."/>
            <person name="Coulson A."/>
            <person name="D'Eustachio P."/>
            <person name="Fitch D.H.A."/>
            <person name="Fulton L.A."/>
            <person name="Fulton R.E."/>
            <person name="Griffiths-Jones S."/>
            <person name="Harris T.W."/>
            <person name="Hillier L.W."/>
            <person name="Kamath R."/>
            <person name="Kuwabara P.E."/>
            <person name="Mardis E.R."/>
            <person name="Marra M.A."/>
            <person name="Miner T.L."/>
            <person name="Minx P."/>
            <person name="Mullikin J.C."/>
            <person name="Plumb R.W."/>
            <person name="Rogers J."/>
            <person name="Schein J.E."/>
            <person name="Sohrmann M."/>
            <person name="Spieth J."/>
            <person name="Stajich J.E."/>
            <person name="Wei C."/>
            <person name="Willey D."/>
            <person name="Wilson R.K."/>
            <person name="Durbin R.M."/>
            <person name="Waterston R.H."/>
        </authorList>
    </citation>
    <scope>NUCLEOTIDE SEQUENCE [LARGE SCALE GENOMIC DNA]</scope>
    <source>
        <strain>AF16</strain>
    </source>
</reference>